<reference key="1">
    <citation type="journal article" date="2006" name="Proc. Natl. Acad. Sci. U.S.A.">
        <title>Molecular genetic anatomy of inter- and intraserotype variation in the human bacterial pathogen group A Streptococcus.</title>
        <authorList>
            <person name="Beres S.B."/>
            <person name="Richter E.W."/>
            <person name="Nagiec M.J."/>
            <person name="Sumby P."/>
            <person name="Porcella S.F."/>
            <person name="DeLeo F.R."/>
            <person name="Musser J.M."/>
        </authorList>
    </citation>
    <scope>NUCLEOTIDE SEQUENCE [LARGE SCALE GENOMIC DNA]</scope>
    <source>
        <strain>MGAS10270</strain>
    </source>
</reference>
<name>PSTB1_STRPD</name>
<evidence type="ECO:0000255" key="1">
    <source>
        <dbReference type="HAMAP-Rule" id="MF_01702"/>
    </source>
</evidence>
<keyword id="KW-0067">ATP-binding</keyword>
<keyword id="KW-1003">Cell membrane</keyword>
<keyword id="KW-0472">Membrane</keyword>
<keyword id="KW-0547">Nucleotide-binding</keyword>
<keyword id="KW-0592">Phosphate transport</keyword>
<keyword id="KW-1278">Translocase</keyword>
<keyword id="KW-0813">Transport</keyword>
<gene>
    <name evidence="1" type="primary">pstB1</name>
    <name type="ordered locus">MGAS10270_Spy1066</name>
</gene>
<organism>
    <name type="scientific">Streptococcus pyogenes serotype M2 (strain MGAS10270)</name>
    <dbReference type="NCBI Taxonomy" id="370552"/>
    <lineage>
        <taxon>Bacteria</taxon>
        <taxon>Bacillati</taxon>
        <taxon>Bacillota</taxon>
        <taxon>Bacilli</taxon>
        <taxon>Lactobacillales</taxon>
        <taxon>Streptococcaceae</taxon>
        <taxon>Streptococcus</taxon>
    </lineage>
</organism>
<dbReference type="EC" id="7.3.2.1" evidence="1"/>
<dbReference type="EMBL" id="CP000260">
    <property type="protein sequence ID" value="ABF34131.1"/>
    <property type="molecule type" value="Genomic_DNA"/>
</dbReference>
<dbReference type="SMR" id="Q1JGL3"/>
<dbReference type="KEGG" id="sph:MGAS10270_Spy1066"/>
<dbReference type="HOGENOM" id="CLU_000604_1_22_9"/>
<dbReference type="Proteomes" id="UP000002436">
    <property type="component" value="Chromosome"/>
</dbReference>
<dbReference type="GO" id="GO:0005886">
    <property type="term" value="C:plasma membrane"/>
    <property type="evidence" value="ECO:0007669"/>
    <property type="project" value="UniProtKB-SubCell"/>
</dbReference>
<dbReference type="GO" id="GO:0005524">
    <property type="term" value="F:ATP binding"/>
    <property type="evidence" value="ECO:0007669"/>
    <property type="project" value="UniProtKB-KW"/>
</dbReference>
<dbReference type="GO" id="GO:0016887">
    <property type="term" value="F:ATP hydrolysis activity"/>
    <property type="evidence" value="ECO:0007669"/>
    <property type="project" value="InterPro"/>
</dbReference>
<dbReference type="GO" id="GO:0015415">
    <property type="term" value="F:ATPase-coupled phosphate ion transmembrane transporter activity"/>
    <property type="evidence" value="ECO:0007669"/>
    <property type="project" value="UniProtKB-EC"/>
</dbReference>
<dbReference type="GO" id="GO:0035435">
    <property type="term" value="P:phosphate ion transmembrane transport"/>
    <property type="evidence" value="ECO:0007669"/>
    <property type="project" value="InterPro"/>
</dbReference>
<dbReference type="CDD" id="cd03260">
    <property type="entry name" value="ABC_PstB_phosphate_transporter"/>
    <property type="match status" value="1"/>
</dbReference>
<dbReference type="Gene3D" id="3.40.50.300">
    <property type="entry name" value="P-loop containing nucleotide triphosphate hydrolases"/>
    <property type="match status" value="1"/>
</dbReference>
<dbReference type="InterPro" id="IPR003593">
    <property type="entry name" value="AAA+_ATPase"/>
</dbReference>
<dbReference type="InterPro" id="IPR003439">
    <property type="entry name" value="ABC_transporter-like_ATP-bd"/>
</dbReference>
<dbReference type="InterPro" id="IPR017871">
    <property type="entry name" value="ABC_transporter-like_CS"/>
</dbReference>
<dbReference type="InterPro" id="IPR027417">
    <property type="entry name" value="P-loop_NTPase"/>
</dbReference>
<dbReference type="InterPro" id="IPR005670">
    <property type="entry name" value="PstB-like"/>
</dbReference>
<dbReference type="NCBIfam" id="TIGR00972">
    <property type="entry name" value="3a0107s01c2"/>
    <property type="match status" value="1"/>
</dbReference>
<dbReference type="PANTHER" id="PTHR43423">
    <property type="entry name" value="ABC TRANSPORTER I FAMILY MEMBER 17"/>
    <property type="match status" value="1"/>
</dbReference>
<dbReference type="PANTHER" id="PTHR43423:SF1">
    <property type="entry name" value="ABC TRANSPORTER I FAMILY MEMBER 17"/>
    <property type="match status" value="1"/>
</dbReference>
<dbReference type="Pfam" id="PF00005">
    <property type="entry name" value="ABC_tran"/>
    <property type="match status" value="1"/>
</dbReference>
<dbReference type="SMART" id="SM00382">
    <property type="entry name" value="AAA"/>
    <property type="match status" value="1"/>
</dbReference>
<dbReference type="SUPFAM" id="SSF52540">
    <property type="entry name" value="P-loop containing nucleoside triphosphate hydrolases"/>
    <property type="match status" value="1"/>
</dbReference>
<dbReference type="PROSITE" id="PS00211">
    <property type="entry name" value="ABC_TRANSPORTER_1"/>
    <property type="match status" value="1"/>
</dbReference>
<dbReference type="PROSITE" id="PS50893">
    <property type="entry name" value="ABC_TRANSPORTER_2"/>
    <property type="match status" value="1"/>
</dbReference>
<dbReference type="PROSITE" id="PS51238">
    <property type="entry name" value="PSTB"/>
    <property type="match status" value="1"/>
</dbReference>
<accession>Q1JGL3</accession>
<feature type="chain" id="PRO_0000272545" description="Phosphate import ATP-binding protein PstB 1">
    <location>
        <begin position="1"/>
        <end position="253"/>
    </location>
</feature>
<feature type="domain" description="ABC transporter" evidence="1">
    <location>
        <begin position="7"/>
        <end position="248"/>
    </location>
</feature>
<feature type="binding site" evidence="1">
    <location>
        <begin position="39"/>
        <end position="46"/>
    </location>
    <ligand>
        <name>ATP</name>
        <dbReference type="ChEBI" id="CHEBI:30616"/>
    </ligand>
</feature>
<protein>
    <recommendedName>
        <fullName evidence="1">Phosphate import ATP-binding protein PstB 1</fullName>
        <ecNumber evidence="1">7.3.2.1</ecNumber>
    </recommendedName>
    <alternativeName>
        <fullName evidence="1">ABC phosphate transporter 1</fullName>
    </alternativeName>
    <alternativeName>
        <fullName evidence="1">Phosphate-transporting ATPase 1</fullName>
    </alternativeName>
</protein>
<proteinExistence type="inferred from homology"/>
<sequence>MMTEPILQIRDLSVYYNQKKTLKDVSLDLYPNEITALIGPSGSGKSTLLRSINRMNDLNPEVTITGSIVYNGHNIYSPRTDTVDLRKEIGMVFQQPNPFPMSIYENVVYGLRLKGIRDKSILDHAVESSLKGASIWNEVKDRLHDSAVGLSGGQQQRVCIARVLATSPRIILLDEPTSALDPISAGKIEETLLLLKKDYTLAIVTRSMQQASRLSDRTGFFLEGDLLECGPTKAMFMNPKRKETEDYISGKFG</sequence>
<comment type="function">
    <text evidence="1">Part of the ABC transporter complex PstSACB involved in phosphate import. Responsible for energy coupling to the transport system.</text>
</comment>
<comment type="catalytic activity">
    <reaction evidence="1">
        <text>phosphate(out) + ATP + H2O = ADP + 2 phosphate(in) + H(+)</text>
        <dbReference type="Rhea" id="RHEA:24440"/>
        <dbReference type="ChEBI" id="CHEBI:15377"/>
        <dbReference type="ChEBI" id="CHEBI:15378"/>
        <dbReference type="ChEBI" id="CHEBI:30616"/>
        <dbReference type="ChEBI" id="CHEBI:43474"/>
        <dbReference type="ChEBI" id="CHEBI:456216"/>
        <dbReference type="EC" id="7.3.2.1"/>
    </reaction>
</comment>
<comment type="subunit">
    <text evidence="1">The complex is composed of two ATP-binding proteins (PstB), two transmembrane proteins (PstC and PstA) and a solute-binding protein (PstS).</text>
</comment>
<comment type="subcellular location">
    <subcellularLocation>
        <location evidence="1">Cell membrane</location>
        <topology evidence="1">Peripheral membrane protein</topology>
    </subcellularLocation>
</comment>
<comment type="similarity">
    <text evidence="1">Belongs to the ABC transporter superfamily. Phosphate importer (TC 3.A.1.7) family.</text>
</comment>